<accession>P28002</accession>
<accession>D0VDZ3</accession>
<organism>
    <name type="scientific">Medicago sativa</name>
    <name type="common">Alfalfa</name>
    <dbReference type="NCBI Taxonomy" id="3879"/>
    <lineage>
        <taxon>Eukaryota</taxon>
        <taxon>Viridiplantae</taxon>
        <taxon>Streptophyta</taxon>
        <taxon>Embryophyta</taxon>
        <taxon>Tracheophyta</taxon>
        <taxon>Spermatophyta</taxon>
        <taxon>Magnoliopsida</taxon>
        <taxon>eudicotyledons</taxon>
        <taxon>Gunneridae</taxon>
        <taxon>Pentapetalae</taxon>
        <taxon>rosids</taxon>
        <taxon>fabids</taxon>
        <taxon>Fabales</taxon>
        <taxon>Fabaceae</taxon>
        <taxon>Papilionoideae</taxon>
        <taxon>50 kb inversion clade</taxon>
        <taxon>NPAAA clade</taxon>
        <taxon>Hologalegina</taxon>
        <taxon>IRL clade</taxon>
        <taxon>Trifolieae</taxon>
        <taxon>Medicago</taxon>
    </lineage>
</organism>
<comment type="function">
    <text evidence="5 9">Catalyzes the conversion of caffeic acid to ferulic acid and of 5-hydroxyferulic acid to sinapic acid (Probable) (PubMed:1898010). The resulting products may subsequently be converted to the corresponding alcohols that are incorporated into lignins (Probable) (PubMed:1898010).</text>
</comment>
<comment type="catalytic activity">
    <reaction evidence="5">
        <text>(E)-caffeate + S-adenosyl-L-methionine = (E)-ferulate + S-adenosyl-L-homocysteine + H(+)</text>
        <dbReference type="Rhea" id="RHEA:20225"/>
        <dbReference type="ChEBI" id="CHEBI:15378"/>
        <dbReference type="ChEBI" id="CHEBI:29749"/>
        <dbReference type="ChEBI" id="CHEBI:57770"/>
        <dbReference type="ChEBI" id="CHEBI:57856"/>
        <dbReference type="ChEBI" id="CHEBI:59789"/>
        <dbReference type="EC" id="2.1.1.68"/>
    </reaction>
    <physiologicalReaction direction="left-to-right" evidence="5">
        <dbReference type="Rhea" id="RHEA:20226"/>
    </physiologicalReaction>
</comment>
<comment type="catalytic activity">
    <reaction evidence="5">
        <text>(E)-5-hydroxyferulate + S-adenosyl-L-methionine = (E)-sinapate + S-adenosyl-L-homocysteine + H(+)</text>
        <dbReference type="Rhea" id="RHEA:60952"/>
        <dbReference type="ChEBI" id="CHEBI:15378"/>
        <dbReference type="ChEBI" id="CHEBI:30023"/>
        <dbReference type="ChEBI" id="CHEBI:57856"/>
        <dbReference type="ChEBI" id="CHEBI:59789"/>
        <dbReference type="ChEBI" id="CHEBI:144381"/>
    </reaction>
    <physiologicalReaction direction="left-to-right" evidence="5">
        <dbReference type="Rhea" id="RHEA:60953"/>
    </physiologicalReaction>
</comment>
<comment type="pathway">
    <text evidence="7">Aromatic compound metabolism; phenylpropanoid biosynthesis.</text>
</comment>
<comment type="subunit">
    <text evidence="3">Homodimer.</text>
</comment>
<comment type="tissue specificity">
    <text evidence="4">More abundant in roots and stems.</text>
</comment>
<comment type="induction">
    <text evidence="4">By infection, plant wounding, or elicitor treatment of cell cultures.</text>
</comment>
<comment type="similarity">
    <text evidence="7">Belongs to the class I-like SAM-binding methyltransferase superfamily. Cation-independent O-methyltransferase family. COMT subfamily.</text>
</comment>
<evidence type="ECO:0000250" key="1">
    <source>
        <dbReference type="UniProtKB" id="F1DBB3"/>
    </source>
</evidence>
<evidence type="ECO:0000255" key="2">
    <source>
        <dbReference type="PROSITE-ProRule" id="PRU01020"/>
    </source>
</evidence>
<evidence type="ECO:0000269" key="3">
    <source>
    </source>
</evidence>
<evidence type="ECO:0000269" key="4">
    <source>
    </source>
</evidence>
<evidence type="ECO:0000269" key="5">
    <source>
    </source>
</evidence>
<evidence type="ECO:0000303" key="6">
    <source>
    </source>
</evidence>
<evidence type="ECO:0000305" key="7"/>
<evidence type="ECO:0000305" key="8">
    <source>
    </source>
</evidence>
<evidence type="ECO:0000305" key="9">
    <source>
    </source>
</evidence>
<evidence type="ECO:0007744" key="10">
    <source>
        <dbReference type="PDB" id="1KYW"/>
    </source>
</evidence>
<evidence type="ECO:0007744" key="11">
    <source>
        <dbReference type="PDB" id="1KYZ"/>
    </source>
</evidence>
<evidence type="ECO:0007829" key="12">
    <source>
        <dbReference type="PDB" id="1KYW"/>
    </source>
</evidence>
<evidence type="ECO:0007829" key="13">
    <source>
        <dbReference type="PDB" id="1KYZ"/>
    </source>
</evidence>
<protein>
    <recommendedName>
        <fullName evidence="6">Caffeic acid 3-O-methyltransferase</fullName>
        <shortName evidence="7">CAOMT</shortName>
        <shortName evidence="6">COMT</shortName>
        <ecNumber evidence="5">2.1.1.68</ecNumber>
    </recommendedName>
    <alternativeName>
        <fullName evidence="7">S-adenosysl-L-methionine:caffeic acid 3-O-methyltransferase</fullName>
    </alternativeName>
</protein>
<proteinExistence type="evidence at protein level"/>
<name>COMT1_MEDSA</name>
<keyword id="KW-0002">3D-structure</keyword>
<keyword id="KW-0438">Lignin biosynthesis</keyword>
<keyword id="KW-0489">Methyltransferase</keyword>
<keyword id="KW-0949">S-adenosyl-L-methionine</keyword>
<keyword id="KW-0808">Transferase</keyword>
<reference key="1">
    <citation type="journal article" date="1991" name="Plant Physiol.">
        <title>Stress responses in alfalfa (Medicago sativa L). X. Molecular cloning and expression of S-adenosyl-L-methionine:caffeic acid 3-O-methyltransferase, a key enzyme of lignin biosynthesis.</title>
        <authorList>
            <person name="Gowri G."/>
            <person name="Bugos R.C."/>
            <person name="Campbell W.H."/>
            <person name="Maxwell C.A."/>
            <person name="Dixon R.A."/>
        </authorList>
    </citation>
    <scope>NUCLEOTIDE SEQUENCE [MRNA]</scope>
    <scope>FUNCTION</scope>
    <scope>TISSUE SPECIFICITY</scope>
    <scope>INDUCTION</scope>
    <source>
        <strain>cv. Apollo</strain>
    </source>
</reference>
<reference key="2">
    <citation type="submission" date="2009-10" db="EMBL/GenBank/DDBJ databases">
        <title>Sequence of a S-adenosyl-L-methionine: caffeic acid 3-0-methyltransferase cDNA from alfalfa leaves.</title>
        <authorList>
            <person name="Sullivan M.L."/>
            <person name="Xaypharath J."/>
        </authorList>
    </citation>
    <scope>NUCLEOTIDE SEQUENCE [MRNA]</scope>
    <source>
        <tissue>Leaf</tissue>
    </source>
</reference>
<reference key="3">
    <citation type="journal article" date="1991" name="Arch. Biochem. Biophys.">
        <title>Purification and characterization of S-adenosyl-L-methionine: caffeic acid 3-O-methyltransferase from suspension cultures of alfalfa (Medicago sativa L.).</title>
        <authorList>
            <person name="Edwards R."/>
            <person name="Dixon R.A."/>
        </authorList>
    </citation>
    <scope>FUNCTION</scope>
    <scope>CATALYTIC ACTIVITY</scope>
</reference>
<reference evidence="10 11" key="4">
    <citation type="journal article" date="2002" name="Plant Cell">
        <title>Structural basis for the modulation of lignin monomer methylation by caffeic acid/5-hydroxyferulic acid 3/5-O-methyltransferase.</title>
        <authorList>
            <person name="Zubieta C."/>
            <person name="Kota P."/>
            <person name="Ferrer J.-L."/>
            <person name="Dixon R.A."/>
            <person name="Noel J.P."/>
        </authorList>
    </citation>
    <scope>X-RAY CRYSTALLOGRAPHY (2.2 ANGSTROMS) IN COMPLEXES WITH S-ADENOSYL-L-HOMOCYSTEINE; FERULATE AND 5-HYDROXYFERULATE</scope>
    <scope>SUBUNIT</scope>
</reference>
<dbReference type="EC" id="2.1.1.68" evidence="5"/>
<dbReference type="EMBL" id="M63853">
    <property type="protein sequence ID" value="AAB46623.1"/>
    <property type="molecule type" value="mRNA"/>
</dbReference>
<dbReference type="EMBL" id="GU066087">
    <property type="protein sequence ID" value="ACY06328.1"/>
    <property type="molecule type" value="mRNA"/>
</dbReference>
<dbReference type="PIR" id="T09673">
    <property type="entry name" value="T09673"/>
</dbReference>
<dbReference type="PDB" id="1KYW">
    <property type="method" value="X-ray"/>
    <property type="resolution" value="2.40 A"/>
    <property type="chains" value="A/C/F=1-365"/>
</dbReference>
<dbReference type="PDB" id="1KYZ">
    <property type="method" value="X-ray"/>
    <property type="resolution" value="2.20 A"/>
    <property type="chains" value="A/C/E=1-365"/>
</dbReference>
<dbReference type="PDBsum" id="1KYW"/>
<dbReference type="PDBsum" id="1KYZ"/>
<dbReference type="SMR" id="P28002"/>
<dbReference type="BRENDA" id="2.1.1.68">
    <property type="organism ID" value="3078"/>
</dbReference>
<dbReference type="UniPathway" id="UPA00711"/>
<dbReference type="EvolutionaryTrace" id="P28002"/>
<dbReference type="GO" id="GO:0047763">
    <property type="term" value="F:caffeate O-methyltransferase activity"/>
    <property type="evidence" value="ECO:0007669"/>
    <property type="project" value="UniProtKB-EC"/>
</dbReference>
<dbReference type="GO" id="GO:0046983">
    <property type="term" value="F:protein dimerization activity"/>
    <property type="evidence" value="ECO:0007669"/>
    <property type="project" value="InterPro"/>
</dbReference>
<dbReference type="GO" id="GO:0008757">
    <property type="term" value="F:S-adenosylmethionine-dependent methyltransferase activity"/>
    <property type="evidence" value="ECO:0000314"/>
    <property type="project" value="UniProtKB"/>
</dbReference>
<dbReference type="GO" id="GO:0009809">
    <property type="term" value="P:lignin biosynthetic process"/>
    <property type="evidence" value="ECO:0007669"/>
    <property type="project" value="UniProtKB-KW"/>
</dbReference>
<dbReference type="GO" id="GO:0032259">
    <property type="term" value="P:methylation"/>
    <property type="evidence" value="ECO:0007669"/>
    <property type="project" value="UniProtKB-KW"/>
</dbReference>
<dbReference type="GO" id="GO:0009699">
    <property type="term" value="P:phenylpropanoid biosynthetic process"/>
    <property type="evidence" value="ECO:0000314"/>
    <property type="project" value="UniProtKB"/>
</dbReference>
<dbReference type="CDD" id="cd02440">
    <property type="entry name" value="AdoMet_MTases"/>
    <property type="match status" value="1"/>
</dbReference>
<dbReference type="FunFam" id="1.10.10.10:FF:000357">
    <property type="entry name" value="Caffeic acid 3-O-methyltransferase"/>
    <property type="match status" value="1"/>
</dbReference>
<dbReference type="FunFam" id="3.40.50.150:FF:000061">
    <property type="entry name" value="Caffeic acid O-methyltransferase"/>
    <property type="match status" value="1"/>
</dbReference>
<dbReference type="Gene3D" id="3.40.50.150">
    <property type="entry name" value="Vaccinia Virus protein VP39"/>
    <property type="match status" value="1"/>
</dbReference>
<dbReference type="Gene3D" id="1.10.10.10">
    <property type="entry name" value="Winged helix-like DNA-binding domain superfamily/Winged helix DNA-binding domain"/>
    <property type="match status" value="1"/>
</dbReference>
<dbReference type="InterPro" id="IPR016461">
    <property type="entry name" value="COMT-like"/>
</dbReference>
<dbReference type="InterPro" id="IPR001077">
    <property type="entry name" value="O_MeTrfase_dom"/>
</dbReference>
<dbReference type="InterPro" id="IPR012967">
    <property type="entry name" value="Plant_O-MeTrfase_dimerisation"/>
</dbReference>
<dbReference type="InterPro" id="IPR029063">
    <property type="entry name" value="SAM-dependent_MTases_sf"/>
</dbReference>
<dbReference type="InterPro" id="IPR036388">
    <property type="entry name" value="WH-like_DNA-bd_sf"/>
</dbReference>
<dbReference type="InterPro" id="IPR036390">
    <property type="entry name" value="WH_DNA-bd_sf"/>
</dbReference>
<dbReference type="PANTHER" id="PTHR11746">
    <property type="entry name" value="O-METHYLTRANSFERASE"/>
    <property type="match status" value="1"/>
</dbReference>
<dbReference type="Pfam" id="PF08100">
    <property type="entry name" value="Dimerisation"/>
    <property type="match status" value="1"/>
</dbReference>
<dbReference type="Pfam" id="PF00891">
    <property type="entry name" value="Methyltransf_2"/>
    <property type="match status" value="1"/>
</dbReference>
<dbReference type="PIRSF" id="PIRSF005739">
    <property type="entry name" value="O-mtase"/>
    <property type="match status" value="1"/>
</dbReference>
<dbReference type="SUPFAM" id="SSF53335">
    <property type="entry name" value="S-adenosyl-L-methionine-dependent methyltransferases"/>
    <property type="match status" value="1"/>
</dbReference>
<dbReference type="SUPFAM" id="SSF46785">
    <property type="entry name" value="Winged helix' DNA-binding domain"/>
    <property type="match status" value="1"/>
</dbReference>
<dbReference type="PROSITE" id="PS51683">
    <property type="entry name" value="SAM_OMT_II"/>
    <property type="match status" value="1"/>
</dbReference>
<sequence length="365" mass="39946">MGSTGETQITPTHISDEEANLFAMQLASASVLPMILKSALELDLLEIIAKAGPGAQISPIEIASQLPTTNPDAPVMLDRMLRLLACYIILTCSVRTQQDGKVQRLYGLATVAKYLVKNEDGVSISALNLMNQDKVLMESWYHLKDAVLDGGIPFNKAYGMTAFEYHGTDPRFNKVFNKGMSDHSTITMKKILETYTGFEGLKSLVDVGGGTGAVINTIVSKYPTIKGINFDLPHVIEDAPSYPGVEHVGGDMFVSIPKADAVFMKWICHDWSDEHCLKFLKNCYEALPDNGKVIVAECILPVAPDSSLATKGVVHIDVIMLAHNPGGKERTQKEFEDLAKGAGFQGFKVHCNAFNTYIMEFLKKV</sequence>
<feature type="chain" id="PRO_0000063204" description="Caffeic acid 3-O-methyltransferase">
    <location>
        <begin position="1"/>
        <end position="365"/>
    </location>
</feature>
<feature type="active site" description="Proton acceptor" evidence="2 8">
    <location>
        <position position="269"/>
    </location>
</feature>
<feature type="active site" evidence="1">
    <location>
        <position position="297"/>
    </location>
</feature>
<feature type="active site" evidence="1">
    <location>
        <position position="329"/>
    </location>
</feature>
<feature type="binding site" evidence="3 11">
    <location>
        <position position="131"/>
    </location>
    <ligand>
        <name>(E)-ferulate</name>
        <dbReference type="ChEBI" id="CHEBI:29749"/>
    </ligand>
</feature>
<feature type="binding site" evidence="3 11">
    <location>
        <position position="208"/>
    </location>
    <ligand>
        <name>S-adenosyl-L-homocysteine</name>
        <dbReference type="ChEBI" id="CHEBI:57856"/>
    </ligand>
</feature>
<feature type="binding site" evidence="3 11">
    <location>
        <position position="231"/>
    </location>
    <ligand>
        <name>S-adenosyl-L-homocysteine</name>
        <dbReference type="ChEBI" id="CHEBI:57856"/>
    </ligand>
</feature>
<feature type="binding site" evidence="3 11">
    <location>
        <position position="251"/>
    </location>
    <ligand>
        <name>S-adenosyl-L-homocysteine</name>
        <dbReference type="ChEBI" id="CHEBI:57856"/>
    </ligand>
</feature>
<feature type="binding site" evidence="3 11">
    <location>
        <position position="252"/>
    </location>
    <ligand>
        <name>S-adenosyl-L-homocysteine</name>
        <dbReference type="ChEBI" id="CHEBI:57856"/>
    </ligand>
</feature>
<feature type="binding site" evidence="3 11">
    <location>
        <position position="264"/>
    </location>
    <ligand>
        <name>S-adenosyl-L-homocysteine</name>
        <dbReference type="ChEBI" id="CHEBI:57856"/>
    </ligand>
</feature>
<feature type="binding site" evidence="3 11">
    <location>
        <position position="265"/>
    </location>
    <ligand>
        <name>S-adenosyl-L-homocysteine</name>
        <dbReference type="ChEBI" id="CHEBI:57856"/>
    </ligand>
</feature>
<feature type="binding site" evidence="3 10">
    <location>
        <position position="270"/>
    </location>
    <ligand>
        <name>(E)-5-hydroxyferulate</name>
        <dbReference type="ChEBI" id="CHEBI:144381"/>
    </ligand>
</feature>
<feature type="sequence conflict" description="In Ref. 2; ACY06328." evidence="7" ref="2">
    <original>I</original>
    <variation>N</variation>
    <location>
        <position position="88"/>
    </location>
</feature>
<feature type="helix" evidence="13">
    <location>
        <begin position="16"/>
        <end position="27"/>
    </location>
</feature>
<feature type="turn" evidence="13">
    <location>
        <begin position="28"/>
        <end position="30"/>
    </location>
</feature>
<feature type="helix" evidence="13">
    <location>
        <begin position="31"/>
        <end position="41"/>
    </location>
</feature>
<feature type="helix" evidence="13">
    <location>
        <begin position="44"/>
        <end position="49"/>
    </location>
</feature>
<feature type="helix" evidence="13">
    <location>
        <begin position="59"/>
        <end position="64"/>
    </location>
</feature>
<feature type="helix" evidence="13">
    <location>
        <begin position="73"/>
        <end position="86"/>
    </location>
</feature>
<feature type="strand" evidence="13">
    <location>
        <begin position="89"/>
        <end position="96"/>
    </location>
</feature>
<feature type="strand" evidence="13">
    <location>
        <begin position="102"/>
        <end position="108"/>
    </location>
</feature>
<feature type="helix" evidence="13">
    <location>
        <begin position="110"/>
        <end position="115"/>
    </location>
</feature>
<feature type="helix" evidence="13">
    <location>
        <begin position="125"/>
        <end position="131"/>
    </location>
</feature>
<feature type="helix" evidence="13">
    <location>
        <begin position="134"/>
        <end position="137"/>
    </location>
</feature>
<feature type="helix" evidence="13">
    <location>
        <begin position="138"/>
        <end position="142"/>
    </location>
</feature>
<feature type="helix" evidence="13">
    <location>
        <begin position="143"/>
        <end position="149"/>
    </location>
</feature>
<feature type="helix" evidence="13">
    <location>
        <begin position="153"/>
        <end position="158"/>
    </location>
</feature>
<feature type="helix" evidence="13">
    <location>
        <begin position="162"/>
        <end position="165"/>
    </location>
</feature>
<feature type="helix" evidence="13">
    <location>
        <begin position="166"/>
        <end position="168"/>
    </location>
</feature>
<feature type="helix" evidence="13">
    <location>
        <begin position="170"/>
        <end position="194"/>
    </location>
</feature>
<feature type="strand" evidence="13">
    <location>
        <begin position="202"/>
        <end position="207"/>
    </location>
</feature>
<feature type="turn" evidence="12">
    <location>
        <begin position="210"/>
        <end position="212"/>
    </location>
</feature>
<feature type="helix" evidence="13">
    <location>
        <begin position="213"/>
        <end position="221"/>
    </location>
</feature>
<feature type="strand" evidence="13">
    <location>
        <begin position="225"/>
        <end position="231"/>
    </location>
</feature>
<feature type="turn" evidence="13">
    <location>
        <begin position="233"/>
        <end position="237"/>
    </location>
</feature>
<feature type="strand" evidence="13">
    <location>
        <begin position="245"/>
        <end position="249"/>
    </location>
</feature>
<feature type="turn" evidence="13">
    <location>
        <begin position="252"/>
        <end position="254"/>
    </location>
</feature>
<feature type="strand" evidence="13">
    <location>
        <begin position="265"/>
        <end position="268"/>
    </location>
</feature>
<feature type="helix" evidence="13">
    <location>
        <begin position="273"/>
        <end position="286"/>
    </location>
</feature>
<feature type="strand" evidence="13">
    <location>
        <begin position="289"/>
        <end position="291"/>
    </location>
</feature>
<feature type="strand" evidence="13">
    <location>
        <begin position="293"/>
        <end position="297"/>
    </location>
</feature>
<feature type="helix" evidence="13">
    <location>
        <begin position="308"/>
        <end position="323"/>
    </location>
</feature>
<feature type="strand" evidence="12">
    <location>
        <begin position="324"/>
        <end position="326"/>
    </location>
</feature>
<feature type="helix" evidence="13">
    <location>
        <begin position="332"/>
        <end position="342"/>
    </location>
</feature>
<feature type="strand" evidence="13">
    <location>
        <begin position="347"/>
        <end position="353"/>
    </location>
</feature>
<feature type="strand" evidence="13">
    <location>
        <begin position="356"/>
        <end position="361"/>
    </location>
</feature>